<dbReference type="EC" id="2.1.1.195" evidence="1"/>
<dbReference type="EMBL" id="CP000117">
    <property type="protein sequence ID" value="ABA20677.1"/>
    <property type="molecule type" value="Genomic_DNA"/>
</dbReference>
<dbReference type="SMR" id="Q3MEA9"/>
<dbReference type="STRING" id="240292.Ava_1053"/>
<dbReference type="KEGG" id="ava:Ava_1053"/>
<dbReference type="eggNOG" id="COG1903">
    <property type="taxonomic scope" value="Bacteria"/>
</dbReference>
<dbReference type="HOGENOM" id="CLU_041273_1_2_3"/>
<dbReference type="UniPathway" id="UPA00148">
    <property type="reaction ID" value="UER00227"/>
</dbReference>
<dbReference type="Proteomes" id="UP000002533">
    <property type="component" value="Chromosome"/>
</dbReference>
<dbReference type="GO" id="GO:0043780">
    <property type="term" value="F:cobalt-precorrin-5B C1-methyltransferase activity"/>
    <property type="evidence" value="ECO:0007669"/>
    <property type="project" value="RHEA"/>
</dbReference>
<dbReference type="GO" id="GO:0019251">
    <property type="term" value="P:anaerobic cobalamin biosynthetic process"/>
    <property type="evidence" value="ECO:0007669"/>
    <property type="project" value="UniProtKB-UniRule"/>
</dbReference>
<dbReference type="GO" id="GO:0032259">
    <property type="term" value="P:methylation"/>
    <property type="evidence" value="ECO:0007669"/>
    <property type="project" value="UniProtKB-KW"/>
</dbReference>
<dbReference type="Gene3D" id="3.30.2110.10">
    <property type="entry name" value="CbiD-like"/>
    <property type="match status" value="1"/>
</dbReference>
<dbReference type="HAMAP" id="MF_00787">
    <property type="entry name" value="CbiD"/>
    <property type="match status" value="1"/>
</dbReference>
<dbReference type="InterPro" id="IPR002748">
    <property type="entry name" value="CbiD"/>
</dbReference>
<dbReference type="InterPro" id="IPR036074">
    <property type="entry name" value="CbiD_sf"/>
</dbReference>
<dbReference type="NCBIfam" id="TIGR00312">
    <property type="entry name" value="cbiD"/>
    <property type="match status" value="1"/>
</dbReference>
<dbReference type="PANTHER" id="PTHR35863">
    <property type="entry name" value="COBALT-PRECORRIN-5B C(1)-METHYLTRANSFERASE"/>
    <property type="match status" value="1"/>
</dbReference>
<dbReference type="PANTHER" id="PTHR35863:SF1">
    <property type="entry name" value="COBALT-PRECORRIN-5B C(1)-METHYLTRANSFERASE"/>
    <property type="match status" value="1"/>
</dbReference>
<dbReference type="Pfam" id="PF01888">
    <property type="entry name" value="CbiD"/>
    <property type="match status" value="1"/>
</dbReference>
<dbReference type="PIRSF" id="PIRSF026782">
    <property type="entry name" value="CbiD"/>
    <property type="match status" value="1"/>
</dbReference>
<dbReference type="SUPFAM" id="SSF111342">
    <property type="entry name" value="CbiD-like"/>
    <property type="match status" value="1"/>
</dbReference>
<proteinExistence type="inferred from homology"/>
<organism>
    <name type="scientific">Trichormus variabilis (strain ATCC 29413 / PCC 7937)</name>
    <name type="common">Anabaena variabilis</name>
    <dbReference type="NCBI Taxonomy" id="240292"/>
    <lineage>
        <taxon>Bacteria</taxon>
        <taxon>Bacillati</taxon>
        <taxon>Cyanobacteriota</taxon>
        <taxon>Cyanophyceae</taxon>
        <taxon>Nostocales</taxon>
        <taxon>Nostocaceae</taxon>
        <taxon>Trichormus</taxon>
    </lineage>
</organism>
<name>CBID_TRIV2</name>
<protein>
    <recommendedName>
        <fullName evidence="1">Cobalt-precorrin-5B C(1)-methyltransferase</fullName>
        <ecNumber evidence="1">2.1.1.195</ecNumber>
    </recommendedName>
    <alternativeName>
        <fullName evidence="1">Cobalt-precorrin-6A synthase</fullName>
    </alternativeName>
</protein>
<gene>
    <name evidence="1" type="primary">cbiD</name>
    <name type="ordered locus">Ava_1053</name>
</gene>
<keyword id="KW-0169">Cobalamin biosynthesis</keyword>
<keyword id="KW-0489">Methyltransferase</keyword>
<keyword id="KW-0949">S-adenosyl-L-methionine</keyword>
<keyword id="KW-0808">Transferase</keyword>
<evidence type="ECO:0000255" key="1">
    <source>
        <dbReference type="HAMAP-Rule" id="MF_00787"/>
    </source>
</evidence>
<sequence>MRSGYTLPVFACAGAIAALHWLRQRQSLQVGLVDLIEPAQMAEVPIEQVAGLSENMALAITRSDPGDNIDLTKNTPIWAVVEWGQGGGEQVTIKGGEGIGKQVNADNRAAIYSYAQRLLQANLTRLLAPEESIIVTIILPEGRSLAVRTSNSAFGVVEGLSLLGTTGISQPLSSPDQLDAFRSELQHKASLYASLVFCIGENGLDLARKIGINAEKLVKTANWLGPMLVEAEALGVKEILLFGYHGKLMKLAGGIFHTHHHLADGRREVLATHCALGGLSKQDIEIVFHAPTAEAALKHLKALDSSTGSDWVNQVYSAIAETIDSRCQEYMQSHSSRGTAATICGSILFDRDRKIIVKSKTACNLMGNLC</sequence>
<feature type="chain" id="PRO_0000257747" description="Cobalt-precorrin-5B C(1)-methyltransferase">
    <location>
        <begin position="1"/>
        <end position="370"/>
    </location>
</feature>
<comment type="function">
    <text evidence="1">Catalyzes the methylation of C-1 in cobalt-precorrin-5B to form cobalt-precorrin-6A.</text>
</comment>
<comment type="catalytic activity">
    <reaction evidence="1">
        <text>Co-precorrin-5B + S-adenosyl-L-methionine = Co-precorrin-6A + S-adenosyl-L-homocysteine</text>
        <dbReference type="Rhea" id="RHEA:26285"/>
        <dbReference type="ChEBI" id="CHEBI:57856"/>
        <dbReference type="ChEBI" id="CHEBI:59789"/>
        <dbReference type="ChEBI" id="CHEBI:60063"/>
        <dbReference type="ChEBI" id="CHEBI:60064"/>
        <dbReference type="EC" id="2.1.1.195"/>
    </reaction>
</comment>
<comment type="pathway">
    <text evidence="1">Cofactor biosynthesis; adenosylcobalamin biosynthesis; cob(II)yrinate a,c-diamide from sirohydrochlorin (anaerobic route): step 6/10.</text>
</comment>
<comment type="similarity">
    <text evidence="1">Belongs to the CbiD family.</text>
</comment>
<accession>Q3MEA9</accession>
<reference key="1">
    <citation type="journal article" date="2014" name="Stand. Genomic Sci.">
        <title>Complete genome sequence of Anabaena variabilis ATCC 29413.</title>
        <authorList>
            <person name="Thiel T."/>
            <person name="Pratte B.S."/>
            <person name="Zhong J."/>
            <person name="Goodwin L."/>
            <person name="Copeland A."/>
            <person name="Lucas S."/>
            <person name="Han C."/>
            <person name="Pitluck S."/>
            <person name="Land M.L."/>
            <person name="Kyrpides N.C."/>
            <person name="Woyke T."/>
        </authorList>
    </citation>
    <scope>NUCLEOTIDE SEQUENCE [LARGE SCALE GENOMIC DNA]</scope>
    <source>
        <strain>ATCC 29413 / PCC 7937</strain>
    </source>
</reference>